<gene>
    <name type="primary">catD</name>
</gene>
<name>CAT_CLODI</name>
<proteinExistence type="inferred from homology"/>
<reference key="1">
    <citation type="journal article" date="1989" name="Nucleic Acids Res.">
        <title>Nucleotide sequence of a chloramphenicol acetyl transferase gene from Clostridium difficile.</title>
        <authorList>
            <person name="Wren B.W."/>
            <person name="Mullany P."/>
            <person name="Clayton C."/>
            <person name="Tabaqchali S."/>
        </authorList>
    </citation>
    <scope>NUCLEOTIDE SEQUENCE [GENOMIC DNA]</scope>
    <source>
        <strain>Type W / Isolate W1</strain>
    </source>
</reference>
<protein>
    <recommendedName>
        <fullName>Chloramphenicol acetyltransferase</fullName>
        <shortName>CAT</shortName>
        <ecNumber>2.3.1.28</ecNumber>
    </recommendedName>
</protein>
<comment type="function">
    <text>This enzyme is an effector of chloramphenicol resistance in bacteria.</text>
</comment>
<comment type="catalytic activity">
    <reaction evidence="1">
        <text>chloramphenicol + acetyl-CoA = chloramphenicol 3-acetate + CoA</text>
        <dbReference type="Rhea" id="RHEA:18421"/>
        <dbReference type="ChEBI" id="CHEBI:16730"/>
        <dbReference type="ChEBI" id="CHEBI:17698"/>
        <dbReference type="ChEBI" id="CHEBI:57287"/>
        <dbReference type="ChEBI" id="CHEBI:57288"/>
        <dbReference type="EC" id="2.3.1.28"/>
    </reaction>
</comment>
<comment type="subunit">
    <text>Homotrimer.</text>
</comment>
<comment type="similarity">
    <text evidence="2">Belongs to the chloramphenicol acetyltransferase family.</text>
</comment>
<dbReference type="EC" id="2.3.1.28"/>
<dbReference type="EMBL" id="X15100">
    <property type="protein sequence ID" value="CAA33203.1"/>
    <property type="molecule type" value="Genomic_DNA"/>
</dbReference>
<dbReference type="PIR" id="S04711">
    <property type="entry name" value="S04711"/>
</dbReference>
<dbReference type="RefSeq" id="WP_063843233.1">
    <property type="nucleotide sequence ID" value="NG_047622.1"/>
</dbReference>
<dbReference type="SMR" id="P11504"/>
<dbReference type="GO" id="GO:0008811">
    <property type="term" value="F:chloramphenicol O-acetyltransferase activity"/>
    <property type="evidence" value="ECO:0007669"/>
    <property type="project" value="UniProtKB-EC"/>
</dbReference>
<dbReference type="GO" id="GO:0046677">
    <property type="term" value="P:response to antibiotic"/>
    <property type="evidence" value="ECO:0007669"/>
    <property type="project" value="UniProtKB-KW"/>
</dbReference>
<dbReference type="Gene3D" id="3.30.559.10">
    <property type="entry name" value="Chloramphenicol acetyltransferase-like domain"/>
    <property type="match status" value="1"/>
</dbReference>
<dbReference type="InterPro" id="IPR023213">
    <property type="entry name" value="CAT-like_dom_sf"/>
</dbReference>
<dbReference type="InterPro" id="IPR018372">
    <property type="entry name" value="Chloramphenicol_AcTrfase_AS"/>
</dbReference>
<dbReference type="InterPro" id="IPR001707">
    <property type="entry name" value="Cmp_AcTrfase"/>
</dbReference>
<dbReference type="NCBIfam" id="NF000491">
    <property type="entry name" value="chloram_CatA"/>
    <property type="match status" value="1"/>
</dbReference>
<dbReference type="PANTHER" id="PTHR38474:SF2">
    <property type="entry name" value="CHLORAMPHENICOL ACETYLTRANSFERASE"/>
    <property type="match status" value="1"/>
</dbReference>
<dbReference type="PANTHER" id="PTHR38474">
    <property type="entry name" value="SLR0299 PROTEIN"/>
    <property type="match status" value="1"/>
</dbReference>
<dbReference type="Pfam" id="PF00302">
    <property type="entry name" value="CAT"/>
    <property type="match status" value="1"/>
</dbReference>
<dbReference type="PIRSF" id="PIRSF000440">
    <property type="entry name" value="CAT"/>
    <property type="match status" value="1"/>
</dbReference>
<dbReference type="SMART" id="SM01059">
    <property type="entry name" value="CAT"/>
    <property type="match status" value="1"/>
</dbReference>
<dbReference type="SUPFAM" id="SSF52777">
    <property type="entry name" value="CoA-dependent acyltransferases"/>
    <property type="match status" value="1"/>
</dbReference>
<dbReference type="PROSITE" id="PS00100">
    <property type="entry name" value="CAT"/>
    <property type="match status" value="1"/>
</dbReference>
<organism>
    <name type="scientific">Clostridioides difficile</name>
    <name type="common">Peptoclostridium difficile</name>
    <dbReference type="NCBI Taxonomy" id="1496"/>
    <lineage>
        <taxon>Bacteria</taxon>
        <taxon>Bacillati</taxon>
        <taxon>Bacillota</taxon>
        <taxon>Clostridia</taxon>
        <taxon>Peptostreptococcales</taxon>
        <taxon>Peptostreptococcaceae</taxon>
        <taxon>Clostridioides</taxon>
    </lineage>
</organism>
<sequence>MVFEKIDKNSWNRKEYFDHYFASVPCTYSMTVKVDITQIKEKGMKLYPAMLYYIAMIVNRHSEFRTAINQDGELGIYDEMIPSYTIFHNDTETFSSLWTECKSDFKSFLADYESDTQRYGNNHRMEGKPNAPENIFNVSMIPWSTFDGFNLNLQKGYDYLIPIFTMGKIIKKDNKIILPLAIQVHHAVCDGFHICRFVNELQELIIVTQVCL</sequence>
<accession>P11504</accession>
<feature type="chain" id="PRO_0000165860" description="Chloramphenicol acetyltransferase">
    <location>
        <begin position="1"/>
        <end position="212"/>
    </location>
</feature>
<feature type="active site" description="Proton acceptor" evidence="1">
    <location>
        <position position="186"/>
    </location>
</feature>
<keyword id="KW-0012">Acyltransferase</keyword>
<keyword id="KW-0046">Antibiotic resistance</keyword>
<keyword id="KW-0808">Transferase</keyword>
<evidence type="ECO:0000255" key="1">
    <source>
        <dbReference type="PROSITE-ProRule" id="PRU10021"/>
    </source>
</evidence>
<evidence type="ECO:0000305" key="2"/>